<gene>
    <name type="primary">nac-3</name>
    <name type="synonym">indy-2</name>
    <name type="synonym">nad-2</name>
    <name type="ORF">K08E5.2</name>
</gene>
<name>NAD3_CAEEL</name>
<keyword id="KW-0025">Alternative splicing</keyword>
<keyword id="KW-0406">Ion transport</keyword>
<keyword id="KW-0472">Membrane</keyword>
<keyword id="KW-1185">Reference proteome</keyword>
<keyword id="KW-0915">Sodium</keyword>
<keyword id="KW-0739">Sodium transport</keyword>
<keyword id="KW-0769">Symport</keyword>
<keyword id="KW-0812">Transmembrane</keyword>
<keyword id="KW-1133">Transmembrane helix</keyword>
<keyword id="KW-0813">Transport</keyword>
<sequence length="566" mass="62326">MSLSLHLSGWPENSESRQRMLESSSSTNFVQHFVSREISNKERLLSLFRRLRNGLVLVLTPLFFGQMLNWEGPEWKCAYCVCIIAVYWMSEVMPLAVTAMLPVVLFPLVGVLDANTTAKEYMNDTNFLFIGGLIMAAAVEKCDLHERVALSVLRCVGSEPKWIMLGFMTVTALLSSFISNTATTAMMVPIGQSVVQQLISSFQHHPTNGERGRLGCKKMATGLVLSICFAANIGGTGTATGTPSNLVMLGQLSALFPKVDGSLNYVTWIFFAYPLMLLCLFVAWMTLVSFFLRDAPEKDEAVTEMLKTRYNELPRMTYAEKSVFVCFCILLSLWVFRNPGVVPGFGVFFKKGAYTDATSAMIVAFLLFVLPSERPDLATYIKKEDLKKRGCLMDWKTMQETFPWSVVLLLGGGFALAAGVKESGLSLLIGNSLSSIEHLPLWILQLLTMLIAMVITNICSNTVTASIFVPIVATLAQRAGHHPFTLMLPTTLASSFAFIFPVGTPPNAIVFGSGMVKVSDMAFVGGIISLELLVLTVLYMNSIAYLTLPLLEFPTWAIIANSTMQQ</sequence>
<comment type="function">
    <text evidence="2">High-affinity sodium-dicarboxylate cotransporter that accepts a range of tricarboxylic acid-cycle intermediates with 4-5 carbon atoms. There is no interaction with monocarboxylates. Plays a role in the regulation of life span.</text>
</comment>
<comment type="subcellular location">
    <subcellularLocation>
        <location evidence="3">Membrane</location>
        <topology evidence="3">Multi-pass membrane protein</topology>
    </subcellularLocation>
</comment>
<comment type="alternative products">
    <event type="alternative splicing"/>
    <isoform>
        <id>Q21339-1</id>
        <name>a</name>
        <sequence type="displayed"/>
    </isoform>
    <isoform>
        <id>Q21339-2</id>
        <name>b</name>
        <sequence type="described" ref="VSP_009680"/>
    </isoform>
</comment>
<comment type="tissue specificity">
    <text evidence="2">Nad-1 and nad-2 are coexpressed in the intestinal tract from early larvae to adults, expression is from the pharynx through to the anus. Expression level is significantly greater in the anterior half of the intestine than in the posterior half.</text>
</comment>
<comment type="developmental stage">
    <text evidence="2">Not detected in the embryo. Expressed at the early larval, late larval and adult stages, with highest levels at the late larval stage.</text>
</comment>
<comment type="similarity">
    <text evidence="3">Belongs to the SLC13A/DASS transporter (TC 2.A.47) family. NADC subfamily.</text>
</comment>
<feature type="chain" id="PRO_0000172498" description="Sodium-dependent high-affinity dicarboxylate transporter 3">
    <location>
        <begin position="1"/>
        <end position="566"/>
    </location>
</feature>
<feature type="transmembrane region" description="Helical" evidence="1">
    <location>
        <begin position="55"/>
        <end position="75"/>
    </location>
</feature>
<feature type="transmembrane region" description="Helical" evidence="1">
    <location>
        <begin position="92"/>
        <end position="112"/>
    </location>
</feature>
<feature type="transmembrane region" description="Helical" evidence="1">
    <location>
        <begin position="123"/>
        <end position="139"/>
    </location>
</feature>
<feature type="transmembrane region" description="Helical" evidence="1">
    <location>
        <begin position="162"/>
        <end position="182"/>
    </location>
</feature>
<feature type="transmembrane region" description="Helical" evidence="1">
    <location>
        <begin position="219"/>
        <end position="239"/>
    </location>
</feature>
<feature type="transmembrane region" description="Helical" evidence="1">
    <location>
        <begin position="268"/>
        <end position="288"/>
    </location>
</feature>
<feature type="transmembrane region" description="Helical" evidence="1">
    <location>
        <begin position="329"/>
        <end position="349"/>
    </location>
</feature>
<feature type="transmembrane region" description="Helical" evidence="1">
    <location>
        <begin position="352"/>
        <end position="372"/>
    </location>
</feature>
<feature type="transmembrane region" description="Helical" evidence="1">
    <location>
        <begin position="400"/>
        <end position="420"/>
    </location>
</feature>
<feature type="transmembrane region" description="Helical" evidence="1">
    <location>
        <begin position="439"/>
        <end position="459"/>
    </location>
</feature>
<feature type="transmembrane region" description="Helical" evidence="1">
    <location>
        <begin position="496"/>
        <end position="516"/>
    </location>
</feature>
<feature type="transmembrane region" description="Helical" evidence="1">
    <location>
        <begin position="521"/>
        <end position="541"/>
    </location>
</feature>
<feature type="splice variant" id="VSP_009680" description="In isoform b." evidence="3">
    <location>
        <begin position="1"/>
        <end position="88"/>
    </location>
</feature>
<accession>Q21339</accession>
<accession>Q86G93</accession>
<accession>Q86R85</accession>
<dbReference type="EMBL" id="AY090485">
    <property type="protein sequence ID" value="AAM11894.1"/>
    <property type="molecule type" value="mRNA"/>
</dbReference>
<dbReference type="EMBL" id="Z30974">
    <property type="protein sequence ID" value="CAA83225.3"/>
    <property type="molecule type" value="Genomic_DNA"/>
</dbReference>
<dbReference type="EMBL" id="Z30974">
    <property type="protein sequence ID" value="CAD82916.1"/>
    <property type="molecule type" value="Genomic_DNA"/>
</dbReference>
<dbReference type="PIR" id="G88575">
    <property type="entry name" value="G88575"/>
</dbReference>
<dbReference type="RefSeq" id="NP_001022673.1">
    <molecule id="Q21339-1"/>
    <property type="nucleotide sequence ID" value="NM_001027502.5"/>
</dbReference>
<dbReference type="RefSeq" id="NP_001379390.1">
    <molecule id="Q21339-2"/>
    <property type="nucleotide sequence ID" value="NM_001392186.1"/>
</dbReference>
<dbReference type="RefSeq" id="NP_871713.1">
    <property type="nucleotide sequence ID" value="NM_181984.5"/>
</dbReference>
<dbReference type="SMR" id="Q21339"/>
<dbReference type="FunCoup" id="Q21339">
    <property type="interactions" value="659"/>
</dbReference>
<dbReference type="STRING" id="6239.K08E5.2a.1"/>
<dbReference type="TCDB" id="2.A.47.1.8">
    <property type="family name" value="the divalent anion:na(+) symporter (dass) family"/>
</dbReference>
<dbReference type="iPTMnet" id="Q21339"/>
<dbReference type="PaxDb" id="6239-K08E5.2a"/>
<dbReference type="EnsemblMetazoa" id="K08E5.2a.1">
    <molecule id="Q21339-1"/>
    <property type="protein sequence ID" value="K08E5.2a.1"/>
    <property type="gene ID" value="WBGene00003519"/>
</dbReference>
<dbReference type="EnsemblMetazoa" id="K08E5.2b.1">
    <molecule id="Q21339-2"/>
    <property type="protein sequence ID" value="K08E5.2b.1"/>
    <property type="gene ID" value="WBGene00003519"/>
</dbReference>
<dbReference type="EnsemblMetazoa" id="K08E5.2b.2">
    <molecule id="Q21339-2"/>
    <property type="protein sequence ID" value="K08E5.2b.2"/>
    <property type="gene ID" value="WBGene00003519"/>
</dbReference>
<dbReference type="GeneID" id="176429"/>
<dbReference type="KEGG" id="cel:CELE_K08E5.2"/>
<dbReference type="UCSC" id="K08E5.2b.2">
    <molecule id="Q21339-1"/>
    <property type="organism name" value="c. elegans"/>
</dbReference>
<dbReference type="AGR" id="WB:WBGene00003519"/>
<dbReference type="CTD" id="176429"/>
<dbReference type="WormBase" id="K08E5.2a">
    <molecule id="Q21339-1"/>
    <property type="protein sequence ID" value="CE33531"/>
    <property type="gene ID" value="WBGene00003519"/>
    <property type="gene designation" value="nac-3"/>
</dbReference>
<dbReference type="WormBase" id="K08E5.2b">
    <molecule id="Q21339-2"/>
    <property type="protein sequence ID" value="CE33532"/>
    <property type="gene ID" value="WBGene00003519"/>
    <property type="gene designation" value="nac-3"/>
</dbReference>
<dbReference type="eggNOG" id="KOG1281">
    <property type="taxonomic scope" value="Eukaryota"/>
</dbReference>
<dbReference type="GeneTree" id="ENSGT01030000234550"/>
<dbReference type="InParanoid" id="Q21339"/>
<dbReference type="OMA" id="LMGIWWM"/>
<dbReference type="OrthoDB" id="6493944at2759"/>
<dbReference type="PhylomeDB" id="Q21339"/>
<dbReference type="Reactome" id="R-CEL-433137">
    <property type="pathway name" value="Sodium-coupled sulphate, di- and tri-carboxylate transporters"/>
</dbReference>
<dbReference type="PRO" id="PR:Q21339"/>
<dbReference type="Proteomes" id="UP000001940">
    <property type="component" value="Chromosome III"/>
</dbReference>
<dbReference type="Bgee" id="WBGene00003519">
    <property type="expression patterns" value="Expressed in larva and 3 other cell types or tissues"/>
</dbReference>
<dbReference type="GO" id="GO:0005886">
    <property type="term" value="C:plasma membrane"/>
    <property type="evidence" value="ECO:0000318"/>
    <property type="project" value="GO_Central"/>
</dbReference>
<dbReference type="GO" id="GO:0015137">
    <property type="term" value="F:citrate transmembrane transporter activity"/>
    <property type="evidence" value="ECO:0000318"/>
    <property type="project" value="GO_Central"/>
</dbReference>
<dbReference type="GO" id="GO:0015362">
    <property type="term" value="F:high-affinity sodium:dicarboxylate symporter activity"/>
    <property type="evidence" value="ECO:0000314"/>
    <property type="project" value="WormBase"/>
</dbReference>
<dbReference type="GO" id="GO:0015141">
    <property type="term" value="F:succinate transmembrane transporter activity"/>
    <property type="evidence" value="ECO:0000314"/>
    <property type="project" value="WormBase"/>
</dbReference>
<dbReference type="GO" id="GO:0015746">
    <property type="term" value="P:citrate transport"/>
    <property type="evidence" value="ECO:0000318"/>
    <property type="project" value="GO_Central"/>
</dbReference>
<dbReference type="GO" id="GO:0008340">
    <property type="term" value="P:determination of adult lifespan"/>
    <property type="evidence" value="ECO:0000315"/>
    <property type="project" value="WormBase"/>
</dbReference>
<dbReference type="GO" id="GO:0015744">
    <property type="term" value="P:succinate transport"/>
    <property type="evidence" value="ECO:0000314"/>
    <property type="project" value="WormBase"/>
</dbReference>
<dbReference type="GO" id="GO:0055085">
    <property type="term" value="P:transmembrane transport"/>
    <property type="evidence" value="ECO:0000318"/>
    <property type="project" value="GO_Central"/>
</dbReference>
<dbReference type="CDD" id="cd01115">
    <property type="entry name" value="SLC13_permease"/>
    <property type="match status" value="1"/>
</dbReference>
<dbReference type="InterPro" id="IPR031312">
    <property type="entry name" value="Na/sul_symport_CS"/>
</dbReference>
<dbReference type="InterPro" id="IPR001898">
    <property type="entry name" value="SLC13A/DASS"/>
</dbReference>
<dbReference type="PANTHER" id="PTHR10283:SF85">
    <property type="entry name" value="SODIUM-DEPENDENT HIGH-AFFINITY DICARBOXYLATE TRANSPORTER 3"/>
    <property type="match status" value="1"/>
</dbReference>
<dbReference type="PANTHER" id="PTHR10283">
    <property type="entry name" value="SOLUTE CARRIER FAMILY 13 MEMBER"/>
    <property type="match status" value="1"/>
</dbReference>
<dbReference type="Pfam" id="PF00939">
    <property type="entry name" value="Na_sulph_symp"/>
    <property type="match status" value="1"/>
</dbReference>
<dbReference type="PROSITE" id="PS01271">
    <property type="entry name" value="NA_SULFATE"/>
    <property type="match status" value="1"/>
</dbReference>
<reference key="1">
    <citation type="journal article" date="2003" name="J. Biol. Chem.">
        <title>Structural and functional characteristics of two sodium-coupled dicarboxylate transporters (ceNaDC1 and ceNaDC2) from Caenorhabditis elegans and their relevance to life span.</title>
        <authorList>
            <person name="Fei Y.-J."/>
            <person name="Inoue K."/>
            <person name="Ganapathy V."/>
        </authorList>
    </citation>
    <scope>NUCLEOTIDE SEQUENCE [MRNA] (ISOFORM A)</scope>
    <scope>FUNCTION</scope>
    <scope>TISSUE SPECIFICITY</scope>
    <scope>DEVELOPMENTAL STAGE</scope>
    <source>
        <strain>Bristol N2</strain>
    </source>
</reference>
<reference key="2">
    <citation type="journal article" date="1998" name="Science">
        <title>Genome sequence of the nematode C. elegans: a platform for investigating biology.</title>
        <authorList>
            <consortium name="The C. elegans sequencing consortium"/>
        </authorList>
    </citation>
    <scope>NUCLEOTIDE SEQUENCE [LARGE SCALE GENOMIC DNA]</scope>
    <scope>ALTERNATIVE SPLICING</scope>
    <source>
        <strain>Bristol N2</strain>
    </source>
</reference>
<organism>
    <name type="scientific">Caenorhabditis elegans</name>
    <dbReference type="NCBI Taxonomy" id="6239"/>
    <lineage>
        <taxon>Eukaryota</taxon>
        <taxon>Metazoa</taxon>
        <taxon>Ecdysozoa</taxon>
        <taxon>Nematoda</taxon>
        <taxon>Chromadorea</taxon>
        <taxon>Rhabditida</taxon>
        <taxon>Rhabditina</taxon>
        <taxon>Rhabditomorpha</taxon>
        <taxon>Rhabditoidea</taxon>
        <taxon>Rhabditidae</taxon>
        <taxon>Peloderinae</taxon>
        <taxon>Caenorhabditis</taxon>
    </lineage>
</organism>
<evidence type="ECO:0000255" key="1"/>
<evidence type="ECO:0000269" key="2">
    <source>
    </source>
</evidence>
<evidence type="ECO:0000305" key="3"/>
<protein>
    <recommendedName>
        <fullName>Sodium-dependent high-affinity dicarboxylate transporter 3</fullName>
    </recommendedName>
    <alternativeName>
        <fullName>Na(+)/dicarboxylate cotransporter 3</fullName>
        <shortName>NaDC-3</shortName>
        <shortName>ceNaDC3</shortName>
    </alternativeName>
</protein>
<proteinExistence type="evidence at transcript level"/>